<evidence type="ECO:0000255" key="1"/>
<evidence type="ECO:0000255" key="2">
    <source>
        <dbReference type="PROSITE-ProRule" id="PRU00555"/>
    </source>
</evidence>
<evidence type="ECO:0000305" key="3"/>
<sequence length="649" mass="71111">MNLKEWLLFSDAVFFAQGTLAWSPSNSYTPANVSCDEDINLIRQASGPSDNETEWLKKRDVYTREALRSFLDRATSNFSDSSLVSQLFSNASDIPRIAVACSGGGYRAMLSGAGMLAAMDNRTDGANEHGLGGLLQSTTYLAGLSGGNWLVGTLAWNNWTSVQDIVNNMTEDDSIWDISNSIINPGGFMIVTTIKRWDHISDAVEGKQDAGFNVSLTDIWGRALSYNFFPSLYRGGVAYTWSTLRDVEVFQNGEMPFPISVADGRYPGTQIIDLNATVFEFNPFEMGSWDPTLNAFTDVKYLGTKVSNGEPVNKGQCVAGYDNTGFIMGTSSSLFNQFLLQINSTSLPSFIKNLVTGFLDDLSEDEDDIAIYAPNPFKDTSYIQDNFSKSISESDYLYLVDGGEDNQNIPLVPLVQDERNVDVIFALDNSADTDYYWPDGASLVSTYERQFSSQGLNMSFPYVPDKRTFVNLGLADKPSFFGCDAQNLTDLNYIPPLVVYIPNARHSYNSNTSTFKLSYTDDERLKMIKNGFEAATRGNLTDDSSFMGCVACAVMRRKQQSLNATLPEECSTCFTNYCWNGTIDDTPVSGLDNSDFDPTAASSAYSAYNTESYSSSSATGSKKNGAGLPATPTSFTSILTLLTAIAGFL</sequence>
<feature type="signal peptide">
    <location>
        <begin position="1"/>
        <end position="21"/>
    </location>
</feature>
<feature type="chain" id="PRO_0000024645" description="Lysophospholipase">
    <location>
        <begin position="22"/>
        <end position="649"/>
    </location>
</feature>
<feature type="domain" description="PLA2c" evidence="2">
    <location>
        <begin position="34"/>
        <end position="584"/>
    </location>
</feature>
<feature type="glycosylation site" description="N-linked (GlcNAc...) asparagine" evidence="1">
    <location>
        <position position="32"/>
    </location>
</feature>
<feature type="glycosylation site" description="N-linked (GlcNAc...) asparagine" evidence="1">
    <location>
        <position position="51"/>
    </location>
</feature>
<feature type="glycosylation site" description="N-linked (GlcNAc...) asparagine" evidence="1">
    <location>
        <position position="77"/>
    </location>
</feature>
<feature type="glycosylation site" description="N-linked (GlcNAc...) asparagine" evidence="1">
    <location>
        <position position="90"/>
    </location>
</feature>
<feature type="glycosylation site" description="N-linked (GlcNAc...) asparagine" evidence="1">
    <location>
        <position position="121"/>
    </location>
</feature>
<feature type="glycosylation site" description="N-linked (GlcNAc...) asparagine" evidence="1">
    <location>
        <position position="158"/>
    </location>
</feature>
<feature type="glycosylation site" description="N-linked (GlcNAc...) asparagine" evidence="1">
    <location>
        <position position="168"/>
    </location>
</feature>
<feature type="glycosylation site" description="N-linked (GlcNAc...) asparagine" evidence="1">
    <location>
        <position position="213"/>
    </location>
</feature>
<feature type="glycosylation site" description="N-linked (GlcNAc...) asparagine" evidence="1">
    <location>
        <position position="275"/>
    </location>
</feature>
<feature type="glycosylation site" description="N-linked (GlcNAc...) asparagine" evidence="1">
    <location>
        <position position="343"/>
    </location>
</feature>
<feature type="glycosylation site" description="N-linked (GlcNAc...) asparagine" evidence="1">
    <location>
        <position position="386"/>
    </location>
</feature>
<feature type="glycosylation site" description="N-linked (GlcNAc...) asparagine" evidence="1">
    <location>
        <position position="457"/>
    </location>
</feature>
<feature type="glycosylation site" description="N-linked (GlcNAc...) asparagine" evidence="1">
    <location>
        <position position="487"/>
    </location>
</feature>
<feature type="glycosylation site" description="N-linked (GlcNAc...) asparagine" evidence="1">
    <location>
        <position position="511"/>
    </location>
</feature>
<feature type="glycosylation site" description="N-linked (GlcNAc...) asparagine" evidence="1">
    <location>
        <position position="539"/>
    </location>
</feature>
<feature type="glycosylation site" description="N-linked (GlcNAc...) asparagine" evidence="1">
    <location>
        <position position="563"/>
    </location>
</feature>
<feature type="glycosylation site" description="N-linked (GlcNAc...) asparagine" evidence="1">
    <location>
        <position position="580"/>
    </location>
</feature>
<protein>
    <recommendedName>
        <fullName>Lysophospholipase</fullName>
        <ecNumber>3.1.1.5</ecNumber>
    </recommendedName>
    <alternativeName>
        <fullName>Phospholipase B</fullName>
    </alternativeName>
</protein>
<reference key="1">
    <citation type="journal article" date="1994" name="FEMS Microbiol. Lett.">
        <title>Cloning and sequencing of phospholipase B gene from the yeast Torulaspora delbrueckii.</title>
        <authorList>
            <person name="Watanabe Y."/>
            <person name="Yashiki Y."/>
            <person name="Sultana G.N."/>
            <person name="Maruyama M."/>
            <person name="Kangawa K."/>
            <person name="Tamai Y."/>
        </authorList>
    </citation>
    <scope>NUCLEOTIDE SEQUENCE [GENOMIC DNA]</scope>
    <scope>PARTIAL PROTEIN SEQUENCE</scope>
    <source>
        <strain>YL-32</strain>
    </source>
</reference>
<organism>
    <name type="scientific">Torulaspora delbrueckii</name>
    <name type="common">Yeast</name>
    <name type="synonym">Candida colliculosa</name>
    <dbReference type="NCBI Taxonomy" id="4950"/>
    <lineage>
        <taxon>Eukaryota</taxon>
        <taxon>Fungi</taxon>
        <taxon>Dikarya</taxon>
        <taxon>Ascomycota</taxon>
        <taxon>Saccharomycotina</taxon>
        <taxon>Saccharomycetes</taxon>
        <taxon>Saccharomycetales</taxon>
        <taxon>Saccharomycetaceae</taxon>
        <taxon>Torulaspora</taxon>
    </lineage>
</organism>
<accession>Q11121</accession>
<proteinExistence type="evidence at protein level"/>
<name>PLB1_TORDE</name>
<comment type="function">
    <text>Catalyzes the release of fatty acids from lysophospholipids.</text>
</comment>
<comment type="catalytic activity">
    <reaction>
        <text>a 1-acyl-sn-glycero-3-phosphocholine + H2O = sn-glycerol 3-phosphocholine + a fatty acid + H(+)</text>
        <dbReference type="Rhea" id="RHEA:15177"/>
        <dbReference type="ChEBI" id="CHEBI:15377"/>
        <dbReference type="ChEBI" id="CHEBI:15378"/>
        <dbReference type="ChEBI" id="CHEBI:16870"/>
        <dbReference type="ChEBI" id="CHEBI:28868"/>
        <dbReference type="ChEBI" id="CHEBI:58168"/>
        <dbReference type="EC" id="3.1.1.5"/>
    </reaction>
</comment>
<comment type="subcellular location">
    <subcellularLocation>
        <location>Secreted</location>
    </subcellularLocation>
</comment>
<comment type="similarity">
    <text evidence="3">Belongs to the lysophospholipase family.</text>
</comment>
<dbReference type="EC" id="3.1.1.5"/>
<dbReference type="EMBL" id="D32134">
    <property type="protein sequence ID" value="BAA06860.1"/>
    <property type="molecule type" value="Genomic_DNA"/>
</dbReference>
<dbReference type="SMR" id="Q11121"/>
<dbReference type="GO" id="GO:0005829">
    <property type="term" value="C:cytosol"/>
    <property type="evidence" value="ECO:0007669"/>
    <property type="project" value="TreeGrafter"/>
</dbReference>
<dbReference type="GO" id="GO:0005783">
    <property type="term" value="C:endoplasmic reticulum"/>
    <property type="evidence" value="ECO:0007669"/>
    <property type="project" value="TreeGrafter"/>
</dbReference>
<dbReference type="GO" id="GO:0005576">
    <property type="term" value="C:extracellular region"/>
    <property type="evidence" value="ECO:0007669"/>
    <property type="project" value="UniProtKB-SubCell"/>
</dbReference>
<dbReference type="GO" id="GO:0005886">
    <property type="term" value="C:plasma membrane"/>
    <property type="evidence" value="ECO:0007669"/>
    <property type="project" value="TreeGrafter"/>
</dbReference>
<dbReference type="GO" id="GO:0004622">
    <property type="term" value="F:lysophospholipase activity"/>
    <property type="evidence" value="ECO:0007669"/>
    <property type="project" value="UniProtKB-EC"/>
</dbReference>
<dbReference type="GO" id="GO:0004623">
    <property type="term" value="F:phospholipase A2 activity"/>
    <property type="evidence" value="ECO:0007669"/>
    <property type="project" value="TreeGrafter"/>
</dbReference>
<dbReference type="GO" id="GO:0046475">
    <property type="term" value="P:glycerophospholipid catabolic process"/>
    <property type="evidence" value="ECO:0007669"/>
    <property type="project" value="TreeGrafter"/>
</dbReference>
<dbReference type="CDD" id="cd07203">
    <property type="entry name" value="cPLA2_Fungal_PLB"/>
    <property type="match status" value="1"/>
</dbReference>
<dbReference type="FunFam" id="3.40.1090.10:FF:000010">
    <property type="entry name" value="Lysophospholipase"/>
    <property type="match status" value="1"/>
</dbReference>
<dbReference type="Gene3D" id="3.40.1090.10">
    <property type="entry name" value="Cytosolic phospholipase A2 catalytic domain"/>
    <property type="match status" value="1"/>
</dbReference>
<dbReference type="InterPro" id="IPR016035">
    <property type="entry name" value="Acyl_Trfase/lysoPLipase"/>
</dbReference>
<dbReference type="InterPro" id="IPR002642">
    <property type="entry name" value="LysoPLipase_cat_dom"/>
</dbReference>
<dbReference type="PANTHER" id="PTHR10728">
    <property type="entry name" value="CYTOSOLIC PHOSPHOLIPASE A2"/>
    <property type="match status" value="1"/>
</dbReference>
<dbReference type="PANTHER" id="PTHR10728:SF33">
    <property type="entry name" value="LYSOPHOSPHOLIPASE 1-RELATED"/>
    <property type="match status" value="1"/>
</dbReference>
<dbReference type="Pfam" id="PF01735">
    <property type="entry name" value="PLA2_B"/>
    <property type="match status" value="1"/>
</dbReference>
<dbReference type="SMART" id="SM00022">
    <property type="entry name" value="PLAc"/>
    <property type="match status" value="1"/>
</dbReference>
<dbReference type="SUPFAM" id="SSF52151">
    <property type="entry name" value="FabD/lysophospholipase-like"/>
    <property type="match status" value="1"/>
</dbReference>
<dbReference type="PROSITE" id="PS51210">
    <property type="entry name" value="PLA2C"/>
    <property type="match status" value="1"/>
</dbReference>
<keyword id="KW-0903">Direct protein sequencing</keyword>
<keyword id="KW-0325">Glycoprotein</keyword>
<keyword id="KW-0378">Hydrolase</keyword>
<keyword id="KW-0442">Lipid degradation</keyword>
<keyword id="KW-0443">Lipid metabolism</keyword>
<keyword id="KW-0964">Secreted</keyword>
<keyword id="KW-0732">Signal</keyword>